<name>CSRP1_CHICK</name>
<protein>
    <recommendedName>
        <fullName>Cysteine and glycine-rich protein 1</fullName>
    </recommendedName>
    <alternativeName>
        <fullName>Cysteine-rich protein 1</fullName>
        <shortName>CRP</shortName>
        <shortName>CRP1</shortName>
    </alternativeName>
</protein>
<evidence type="ECO:0000250" key="1">
    <source>
        <dbReference type="UniProtKB" id="P21291"/>
    </source>
</evidence>
<evidence type="ECO:0000255" key="2"/>
<evidence type="ECO:0000255" key="3">
    <source>
        <dbReference type="PROSITE-ProRule" id="PRU00125"/>
    </source>
</evidence>
<evidence type="ECO:0000269" key="4">
    <source>
    </source>
</evidence>
<evidence type="ECO:0000269" key="5">
    <source>
    </source>
</evidence>
<evidence type="ECO:0000305" key="6"/>
<evidence type="ECO:0007829" key="7">
    <source>
        <dbReference type="PDB" id="1B8T"/>
    </source>
</evidence>
<evidence type="ECO:0007829" key="8">
    <source>
        <dbReference type="PDB" id="1CTL"/>
    </source>
</evidence>
<gene>
    <name type="primary">CSRP1</name>
    <name type="synonym">CSRP</name>
</gene>
<organism>
    <name type="scientific">Gallus gallus</name>
    <name type="common">Chicken</name>
    <dbReference type="NCBI Taxonomy" id="9031"/>
    <lineage>
        <taxon>Eukaryota</taxon>
        <taxon>Metazoa</taxon>
        <taxon>Chordata</taxon>
        <taxon>Craniata</taxon>
        <taxon>Vertebrata</taxon>
        <taxon>Euteleostomi</taxon>
        <taxon>Archelosauria</taxon>
        <taxon>Archosauria</taxon>
        <taxon>Dinosauria</taxon>
        <taxon>Saurischia</taxon>
        <taxon>Theropoda</taxon>
        <taxon>Coelurosauria</taxon>
        <taxon>Aves</taxon>
        <taxon>Neognathae</taxon>
        <taxon>Galloanserae</taxon>
        <taxon>Galliformes</taxon>
        <taxon>Phasianidae</taxon>
        <taxon>Phasianinae</taxon>
        <taxon>Gallus</taxon>
    </lineage>
</organism>
<reference key="1">
    <citation type="journal article" date="1994" name="J. Cell Biol.">
        <title>Biochemical and molecular characterization of the chicken cysteine-rich protein, a developmentally regulated LIM-domain protein that is associated with the actin cytoskeleton.</title>
        <authorList>
            <person name="Crawford A.W."/>
            <person name="Pino J.D."/>
            <person name="Beckerle M.C."/>
        </authorList>
    </citation>
    <scope>NUCLEOTIDE SEQUENCE [MRNA]</scope>
    <scope>FUNCTION</scope>
    <scope>SUBUNIT</scope>
    <scope>INTERACTION WITH ZYX</scope>
    <scope>SUBCELLULAR LOCATION</scope>
    <scope>TISSUE SPECIFICITY</scope>
    <source>
        <tissue>Embryonic fibroblast</tissue>
    </source>
</reference>
<reference key="2">
    <citation type="journal article" date="1992" name="J. Cell Biol.">
        <title>Zyxin and cCRP: two interactive LIM domain proteins associated with the cytoskeleton.</title>
        <authorList>
            <person name="Sadler I."/>
            <person name="Crawford A.W."/>
            <person name="Michelsen J.W."/>
            <person name="Beckerle M.C."/>
        </authorList>
    </citation>
    <scope>PROTEIN SEQUENCE OF 2-50; 70-84; 112-130 AND 178-189</scope>
    <scope>INTERACTION WITH ZYX</scope>
</reference>
<reference key="3">
    <citation type="journal article" date="1993" name="Proc. Natl. Acad. Sci. U.S.A.">
        <title>The LIM motif defines a specific zinc-binding protein domain.</title>
        <authorList>
            <person name="Michelsen J.W."/>
            <person name="Schmeichel K.L."/>
            <person name="Beckerle M.C."/>
            <person name="Winge D.R."/>
        </authorList>
    </citation>
    <scope>ZINC-BINDING</scope>
</reference>
<reference key="4">
    <citation type="journal article" date="1994" name="J. Biol. Chem.">
        <title>Mutational analysis of the metal sites in an LIM domain.</title>
        <authorList>
            <person name="Michelsen J.W."/>
            <person name="Sewell A.K."/>
            <person name="Louis H.A."/>
            <person name="Olsen J.I."/>
            <person name="Davis D.R."/>
            <person name="Winge D.R."/>
            <person name="Beckerle M.C."/>
        </authorList>
    </citation>
    <scope>MUTAGENESIS</scope>
</reference>
<reference key="5">
    <citation type="journal article" date="1994" name="Nat. Struct. Biol.">
        <title>Structure of the carboxy-terminal LIM domain from the cysteine rich protein CRP.</title>
        <authorList>
            <person name="Perez-Alvarado G.C."/>
            <person name="Miles C."/>
            <person name="Michelsen J.W."/>
            <person name="Louis H.A."/>
            <person name="Winge D.R."/>
        </authorList>
    </citation>
    <scope>STRUCTURE BY NMR OF C-TERMINAL LIM DOMAIN</scope>
</reference>
<proteinExistence type="evidence at protein level"/>
<sequence length="192" mass="20385">MPNWGGGKKCGVCQKAVYFAEEVQCEGSSFHKSCFLCMVCKKNLDSTTVAVHGDEIYCKSCYGKKYGPKGYGYGMGAGTLSTDKGESLGIKYEEGQSHRPTNPNASRMAQKVGGSDGCPRCGQAVYAAEKVIGAGKSWHKSCFRCAKCGKSLESTTLADKDGEIYCKGCYAKNFGPKGFGFGQGAGALIHSQ</sequence>
<feature type="initiator methionine" description="Removed" evidence="4">
    <location>
        <position position="1"/>
    </location>
</feature>
<feature type="chain" id="PRO_0000075719" description="Cysteine and glycine-rich protein 1">
    <location>
        <begin position="2"/>
        <end position="192"/>
    </location>
</feature>
<feature type="domain" description="LIM zinc-binding 1" evidence="3">
    <location>
        <begin position="10"/>
        <end position="61"/>
    </location>
</feature>
<feature type="domain" description="LIM zinc-binding 2" evidence="3">
    <location>
        <begin position="118"/>
        <end position="169"/>
    </location>
</feature>
<feature type="short sequence motif" description="Nuclear localization signal" evidence="2">
    <location>
        <begin position="64"/>
        <end position="69"/>
    </location>
</feature>
<feature type="turn" evidence="7">
    <location>
        <begin position="11"/>
        <end position="13"/>
    </location>
</feature>
<feature type="strand" evidence="7">
    <location>
        <begin position="23"/>
        <end position="25"/>
    </location>
</feature>
<feature type="strand" evidence="7">
    <location>
        <begin position="28"/>
        <end position="30"/>
    </location>
</feature>
<feature type="turn" evidence="7">
    <location>
        <begin position="32"/>
        <end position="34"/>
    </location>
</feature>
<feature type="turn" evidence="7">
    <location>
        <begin position="38"/>
        <end position="40"/>
    </location>
</feature>
<feature type="strand" evidence="7">
    <location>
        <begin position="46"/>
        <end position="52"/>
    </location>
</feature>
<feature type="strand" evidence="7">
    <location>
        <begin position="55"/>
        <end position="58"/>
    </location>
</feature>
<feature type="helix" evidence="7">
    <location>
        <begin position="59"/>
        <end position="66"/>
    </location>
</feature>
<feature type="strand" evidence="8">
    <location>
        <begin position="110"/>
        <end position="117"/>
    </location>
</feature>
<feature type="turn" evidence="7">
    <location>
        <begin position="119"/>
        <end position="121"/>
    </location>
</feature>
<feature type="strand" evidence="7">
    <location>
        <begin position="127"/>
        <end position="129"/>
    </location>
</feature>
<feature type="strand" evidence="7">
    <location>
        <begin position="131"/>
        <end position="133"/>
    </location>
</feature>
<feature type="strand" evidence="7">
    <location>
        <begin position="136"/>
        <end position="138"/>
    </location>
</feature>
<feature type="turn" evidence="7">
    <location>
        <begin position="140"/>
        <end position="142"/>
    </location>
</feature>
<feature type="turn" evidence="7">
    <location>
        <begin position="146"/>
        <end position="148"/>
    </location>
</feature>
<feature type="strand" evidence="7">
    <location>
        <begin position="154"/>
        <end position="160"/>
    </location>
</feature>
<feature type="strand" evidence="7">
    <location>
        <begin position="163"/>
        <end position="166"/>
    </location>
</feature>
<feature type="helix" evidence="7">
    <location>
        <begin position="167"/>
        <end position="173"/>
    </location>
</feature>
<feature type="strand" evidence="8">
    <location>
        <begin position="180"/>
        <end position="182"/>
    </location>
</feature>
<feature type="turn" evidence="8">
    <location>
        <begin position="189"/>
        <end position="191"/>
    </location>
</feature>
<accession>P67966</accession>
<accession>P32965</accession>
<dbReference type="EMBL" id="X73831">
    <property type="protein sequence ID" value="CAA52053.1"/>
    <property type="molecule type" value="mRNA"/>
</dbReference>
<dbReference type="PIR" id="A49648">
    <property type="entry name" value="A49648"/>
</dbReference>
<dbReference type="PIR" id="B44358">
    <property type="entry name" value="B44358"/>
</dbReference>
<dbReference type="PIR" id="C44358">
    <property type="entry name" value="C44358"/>
</dbReference>
<dbReference type="RefSeq" id="NP_990579.1">
    <property type="nucleotide sequence ID" value="NM_205248.2"/>
</dbReference>
<dbReference type="RefSeq" id="XP_015154179.1">
    <property type="nucleotide sequence ID" value="XM_015298693.4"/>
</dbReference>
<dbReference type="RefSeq" id="XP_024999445.1">
    <property type="nucleotide sequence ID" value="XM_025143677.3"/>
</dbReference>
<dbReference type="RefSeq" id="XP_024999446.1">
    <property type="nucleotide sequence ID" value="XM_025143678.3"/>
</dbReference>
<dbReference type="RefSeq" id="XP_046788842.1">
    <property type="nucleotide sequence ID" value="XM_046932886.1"/>
</dbReference>
<dbReference type="RefSeq" id="XP_046788843.1">
    <property type="nucleotide sequence ID" value="XM_046932887.1"/>
</dbReference>
<dbReference type="RefSeq" id="XP_046788844.1">
    <property type="nucleotide sequence ID" value="XM_046932888.1"/>
</dbReference>
<dbReference type="PDB" id="1B8T">
    <property type="method" value="NMR"/>
    <property type="chains" value="A=1-192"/>
</dbReference>
<dbReference type="PDB" id="1CTL">
    <property type="method" value="NMR"/>
    <property type="chains" value="A=108-192"/>
</dbReference>
<dbReference type="PDBsum" id="1B8T"/>
<dbReference type="PDBsum" id="1CTL"/>
<dbReference type="SMR" id="P67966"/>
<dbReference type="FunCoup" id="P67966">
    <property type="interactions" value="1710"/>
</dbReference>
<dbReference type="STRING" id="9031.ENSGALP00000000423"/>
<dbReference type="PaxDb" id="9031-ENSGALP00000000423"/>
<dbReference type="Ensembl" id="ENSGALT00010064425.1">
    <property type="protein sequence ID" value="ENSGALP00010039528.1"/>
    <property type="gene ID" value="ENSGALG00010026508.1"/>
</dbReference>
<dbReference type="GeneID" id="396176"/>
<dbReference type="KEGG" id="gga:396176"/>
<dbReference type="CTD" id="1465"/>
<dbReference type="VEuPathDB" id="HostDB:geneid_396176"/>
<dbReference type="eggNOG" id="KOG1700">
    <property type="taxonomic scope" value="Eukaryota"/>
</dbReference>
<dbReference type="GeneTree" id="ENSGT00940000156777"/>
<dbReference type="HOGENOM" id="CLU_054591_1_0_1"/>
<dbReference type="InParanoid" id="P67966"/>
<dbReference type="OMA" id="NYVAHEQ"/>
<dbReference type="OrthoDB" id="8062037at2759"/>
<dbReference type="PhylomeDB" id="P67966"/>
<dbReference type="EvolutionaryTrace" id="P67966"/>
<dbReference type="PRO" id="PR:P67966"/>
<dbReference type="Proteomes" id="UP000000539">
    <property type="component" value="Chromosome 26"/>
</dbReference>
<dbReference type="Bgee" id="ENSGALG00000000318">
    <property type="expression patterns" value="Expressed in colon and 13 other cell types or tissues"/>
</dbReference>
<dbReference type="GO" id="GO:0031252">
    <property type="term" value="C:cell leading edge"/>
    <property type="evidence" value="ECO:0000314"/>
    <property type="project" value="AgBase"/>
</dbReference>
<dbReference type="GO" id="GO:0005737">
    <property type="term" value="C:cytoplasm"/>
    <property type="evidence" value="ECO:0000314"/>
    <property type="project" value="AgBase"/>
</dbReference>
<dbReference type="GO" id="GO:0005925">
    <property type="term" value="C:focal adhesion"/>
    <property type="evidence" value="ECO:0000314"/>
    <property type="project" value="AgBase"/>
</dbReference>
<dbReference type="GO" id="GO:0005634">
    <property type="term" value="C:nucleus"/>
    <property type="evidence" value="ECO:0000318"/>
    <property type="project" value="GO_Central"/>
</dbReference>
<dbReference type="GO" id="GO:0001725">
    <property type="term" value="C:stress fiber"/>
    <property type="evidence" value="ECO:0000314"/>
    <property type="project" value="AgBase"/>
</dbReference>
<dbReference type="GO" id="GO:0030018">
    <property type="term" value="C:Z disc"/>
    <property type="evidence" value="ECO:0000318"/>
    <property type="project" value="GO_Central"/>
</dbReference>
<dbReference type="GO" id="GO:0042805">
    <property type="term" value="F:actinin binding"/>
    <property type="evidence" value="ECO:0000318"/>
    <property type="project" value="GO_Central"/>
</dbReference>
<dbReference type="GO" id="GO:0051393">
    <property type="term" value="F:alpha-actinin binding"/>
    <property type="evidence" value="ECO:0000353"/>
    <property type="project" value="AgBase"/>
</dbReference>
<dbReference type="GO" id="GO:0046872">
    <property type="term" value="F:metal ion binding"/>
    <property type="evidence" value="ECO:0007669"/>
    <property type="project" value="UniProtKB-KW"/>
</dbReference>
<dbReference type="GO" id="GO:0051219">
    <property type="term" value="F:phosphoprotein binding"/>
    <property type="evidence" value="ECO:0000353"/>
    <property type="project" value="AgBase"/>
</dbReference>
<dbReference type="GO" id="GO:0008307">
    <property type="term" value="F:structural constituent of muscle"/>
    <property type="evidence" value="ECO:0000318"/>
    <property type="project" value="GO_Central"/>
</dbReference>
<dbReference type="GO" id="GO:0060537">
    <property type="term" value="P:muscle tissue development"/>
    <property type="evidence" value="ECO:0000318"/>
    <property type="project" value="GO_Central"/>
</dbReference>
<dbReference type="GO" id="GO:0045214">
    <property type="term" value="P:sarcomere organization"/>
    <property type="evidence" value="ECO:0000318"/>
    <property type="project" value="GO_Central"/>
</dbReference>
<dbReference type="CDD" id="cd09479">
    <property type="entry name" value="LIM1_CRP1"/>
    <property type="match status" value="1"/>
</dbReference>
<dbReference type="CDD" id="cd09403">
    <property type="entry name" value="LIM2_CRP"/>
    <property type="match status" value="1"/>
</dbReference>
<dbReference type="DisProt" id="DP00922"/>
<dbReference type="FunFam" id="2.10.110.10:FF:000001">
    <property type="entry name" value="Cysteine and glycine-rich protein 1"/>
    <property type="match status" value="2"/>
</dbReference>
<dbReference type="Gene3D" id="2.10.110.10">
    <property type="entry name" value="Cysteine Rich Protein"/>
    <property type="match status" value="2"/>
</dbReference>
<dbReference type="InterPro" id="IPR001781">
    <property type="entry name" value="Znf_LIM"/>
</dbReference>
<dbReference type="PANTHER" id="PTHR24215:SF23">
    <property type="entry name" value="CYSTEINE AND GLYCINE-RICH PROTEIN 1"/>
    <property type="match status" value="1"/>
</dbReference>
<dbReference type="PANTHER" id="PTHR24215">
    <property type="entry name" value="RHO-GTPASE-ACTIVATING PROTEIN LRG1"/>
    <property type="match status" value="1"/>
</dbReference>
<dbReference type="Pfam" id="PF00412">
    <property type="entry name" value="LIM"/>
    <property type="match status" value="2"/>
</dbReference>
<dbReference type="SMART" id="SM00132">
    <property type="entry name" value="LIM"/>
    <property type="match status" value="2"/>
</dbReference>
<dbReference type="SUPFAM" id="SSF57716">
    <property type="entry name" value="Glucocorticoid receptor-like (DNA-binding domain)"/>
    <property type="match status" value="4"/>
</dbReference>
<dbReference type="PROSITE" id="PS00478">
    <property type="entry name" value="LIM_DOMAIN_1"/>
    <property type="match status" value="2"/>
</dbReference>
<dbReference type="PROSITE" id="PS50023">
    <property type="entry name" value="LIM_DOMAIN_2"/>
    <property type="match status" value="2"/>
</dbReference>
<comment type="function">
    <text evidence="5">Heat stable protein, that interacts with zyxin/ZYX. May be a component of a signal transduction pathway that mediates adhesion-stimulated changes in gene expression.</text>
</comment>
<comment type="subunit">
    <text evidence="4 5">Probable monomer. Interacts with ZYX.</text>
</comment>
<comment type="subcellular location">
    <subcellularLocation>
        <location evidence="1">Nucleus</location>
    </subcellularLocation>
    <subcellularLocation>
        <location evidence="5">Cytoplasm</location>
    </subcellularLocation>
    <subcellularLocation>
        <location evidence="5">Cytoplasm</location>
        <location evidence="5">Cytoskeleton</location>
    </subcellularLocation>
    <text evidence="5">Associates with the actin cytoskeleton.</text>
</comment>
<comment type="tissue specificity">
    <text evidence="5">Most prominent in tissues that are enriched in smooth muscle cells, such as gizzard, stomach, and intestine. Lower level in the heart, no expression in liver, skeletal muscle, or brain.</text>
</comment>
<comment type="developmental stage">
    <text>Expression levels increase dramatically during smooth muscle maturation.</text>
</comment>
<comment type="domain">
    <text evidence="6">Glycine-rich repeats mediate the association with the actin cytoskeleton.</text>
</comment>
<keyword id="KW-0002">3D-structure</keyword>
<keyword id="KW-0963">Cytoplasm</keyword>
<keyword id="KW-0206">Cytoskeleton</keyword>
<keyword id="KW-0903">Direct protein sequencing</keyword>
<keyword id="KW-0440">LIM domain</keyword>
<keyword id="KW-0479">Metal-binding</keyword>
<keyword id="KW-0539">Nucleus</keyword>
<keyword id="KW-1185">Reference proteome</keyword>
<keyword id="KW-0677">Repeat</keyword>
<keyword id="KW-0862">Zinc</keyword>